<name>MDM12_CRYNJ</name>
<organism>
    <name type="scientific">Cryptococcus neoformans var. neoformans serotype D (strain JEC21 / ATCC MYA-565)</name>
    <name type="common">Filobasidiella neoformans</name>
    <dbReference type="NCBI Taxonomy" id="214684"/>
    <lineage>
        <taxon>Eukaryota</taxon>
        <taxon>Fungi</taxon>
        <taxon>Dikarya</taxon>
        <taxon>Basidiomycota</taxon>
        <taxon>Agaricomycotina</taxon>
        <taxon>Tremellomycetes</taxon>
        <taxon>Tremellales</taxon>
        <taxon>Cryptococcaceae</taxon>
        <taxon>Cryptococcus</taxon>
        <taxon>Cryptococcus neoformans species complex</taxon>
    </lineage>
</organism>
<reference key="1">
    <citation type="journal article" date="2005" name="Science">
        <title>The genome of the basidiomycetous yeast and human pathogen Cryptococcus neoformans.</title>
        <authorList>
            <person name="Loftus B.J."/>
            <person name="Fung E."/>
            <person name="Roncaglia P."/>
            <person name="Rowley D."/>
            <person name="Amedeo P."/>
            <person name="Bruno D."/>
            <person name="Vamathevan J."/>
            <person name="Miranda M."/>
            <person name="Anderson I.J."/>
            <person name="Fraser J.A."/>
            <person name="Allen J.E."/>
            <person name="Bosdet I.E."/>
            <person name="Brent M.R."/>
            <person name="Chiu R."/>
            <person name="Doering T.L."/>
            <person name="Donlin M.J."/>
            <person name="D'Souza C.A."/>
            <person name="Fox D.S."/>
            <person name="Grinberg V."/>
            <person name="Fu J."/>
            <person name="Fukushima M."/>
            <person name="Haas B.J."/>
            <person name="Huang J.C."/>
            <person name="Janbon G."/>
            <person name="Jones S.J.M."/>
            <person name="Koo H.L."/>
            <person name="Krzywinski M.I."/>
            <person name="Kwon-Chung K.J."/>
            <person name="Lengeler K.B."/>
            <person name="Maiti R."/>
            <person name="Marra M.A."/>
            <person name="Marra R.E."/>
            <person name="Mathewson C.A."/>
            <person name="Mitchell T.G."/>
            <person name="Pertea M."/>
            <person name="Riggs F.R."/>
            <person name="Salzberg S.L."/>
            <person name="Schein J.E."/>
            <person name="Shvartsbeyn A."/>
            <person name="Shin H."/>
            <person name="Shumway M."/>
            <person name="Specht C.A."/>
            <person name="Suh B.B."/>
            <person name="Tenney A."/>
            <person name="Utterback T.R."/>
            <person name="Wickes B.L."/>
            <person name="Wortman J.R."/>
            <person name="Wye N.H."/>
            <person name="Kronstad J.W."/>
            <person name="Lodge J.K."/>
            <person name="Heitman J."/>
            <person name="Davis R.W."/>
            <person name="Fraser C.M."/>
            <person name="Hyman R.W."/>
        </authorList>
    </citation>
    <scope>NUCLEOTIDE SEQUENCE [LARGE SCALE GENOMIC DNA]</scope>
    <source>
        <strain>JEC21 / ATCC MYA-565</strain>
    </source>
</reference>
<comment type="function">
    <text evidence="1">Component of the ERMES/MDM complex, which serves as a molecular tether to connect the endoplasmic reticulum (ER) and mitochondria. Components of this complex are involved in the control of mitochondrial shape and protein biogenesis, and function in nonvesicular lipid trafficking between the ER and mitochondria. MDM12 is required for the interaction of the ER-resident membrane protein MMM1 and the outer mitochondrial membrane-resident beta-barrel protein MDM10. The MDM12-MMM1 subcomplex functions in the major beta-barrel assembly pathway that is responsible for biogenesis of all mitochondrial outer membrane beta-barrel proteins, and acts in a late step after the SAM complex. The MDM10-MDM12-MMM1 subcomplex further acts in the TOM40-specific pathway after the action of the MDM12-MMM1 complex. Essential for establishing and maintaining the structure of mitochondria and maintenance of mtDNA nucleoids.</text>
</comment>
<comment type="subunit">
    <text evidence="1">Component of the ER-mitochondria encounter structure (ERMES) or MDM complex, composed of MMM1, MDM10, MDM12 and MDM34. A MMM1 homodimer associates with one molecule of MDM12 on each side in a pairwise head-to-tail manner, and the SMP-LTD domains of MMM1 and MDM12 generate a continuous hydrophobic tunnel for phospholipid trafficking.</text>
</comment>
<comment type="subcellular location">
    <subcellularLocation>
        <location evidence="1">Mitochondrion outer membrane</location>
        <topology evidence="1">Peripheral membrane protein</topology>
        <orientation evidence="1">Cytoplasmic side</orientation>
    </subcellularLocation>
    <subcellularLocation>
        <location evidence="1">Endoplasmic reticulum membrane</location>
        <topology evidence="1">Peripheral membrane protein</topology>
        <orientation evidence="1">Cytoplasmic side</orientation>
    </subcellularLocation>
    <text evidence="1">The ERMES/MDM complex localizes to a few discrete foci (around 10 per single cell), that represent mitochondria-endoplasmic reticulum junctions. These foci are often found next to mtDNA nucleoids.</text>
</comment>
<comment type="domain">
    <text evidence="1">The SMP-LTD domain is a barrel-like domain that can bind various types of glycerophospholipids in its interior and mediate their transfer between two adjacent bilayers.</text>
</comment>
<comment type="similarity">
    <text evidence="1">Belongs to the MDM12 family.</text>
</comment>
<feature type="chain" id="PRO_0000384285" description="Mitochondrial distribution and morphology protein 12">
    <location>
        <begin position="1"/>
        <end position="388"/>
    </location>
</feature>
<feature type="domain" description="SMP-LTD" evidence="1">
    <location>
        <begin position="1"/>
        <end position="388"/>
    </location>
</feature>
<feature type="region of interest" description="Disordered" evidence="2">
    <location>
        <begin position="75"/>
        <end position="101"/>
    </location>
</feature>
<feature type="region of interest" description="Disordered" evidence="2">
    <location>
        <begin position="209"/>
        <end position="249"/>
    </location>
</feature>
<feature type="compositionally biased region" description="Basic and acidic residues" evidence="2">
    <location>
        <begin position="83"/>
        <end position="101"/>
    </location>
</feature>
<feature type="compositionally biased region" description="Pro residues" evidence="2">
    <location>
        <begin position="234"/>
        <end position="243"/>
    </location>
</feature>
<protein>
    <recommendedName>
        <fullName evidence="1">Mitochondrial distribution and morphology protein 12</fullName>
    </recommendedName>
    <alternativeName>
        <fullName evidence="1">Mitochondrial inheritance component MDM12</fullName>
    </alternativeName>
</protein>
<accession>P0CO68</accession>
<accession>Q55K79</accession>
<accession>Q5K9C0</accession>
<sequence>MSLDINWSLLSQPDESATDQLSESLIALLNAQLAEAHRPSFIGPITVTAFDFGNAGPDLEVKDIRDVWRVFDQGDDEGDFAEEEKQREKEREERDKLRNEALKSSLDGERYELVDRYSSTEGTSSFEYQPEYDIHEQHGDDYRIRGRRPLSYTFGYPHDRLAVHRSSSSRSFIPFPFDHPPPALHIPSTPGLNPSLVSHPISARFSRRPMSIAASAAPRPTPRRRPIEPSSTSPSPPAHPAGLPPKVSSSSIPSLQLHLRLSHASDLHLTLLTSLQVNYPSALFMALPLKLSITGFQLNADIVMAYSGEKNRVHLTIVDDESNPAHKEDKQIPLGQRLLSNLQIESEIGHADAHVLRNVGKVERFIVDVVRKTLVDELVFPNFHTVAL</sequence>
<evidence type="ECO:0000255" key="1">
    <source>
        <dbReference type="HAMAP-Rule" id="MF_03104"/>
    </source>
</evidence>
<evidence type="ECO:0000256" key="2">
    <source>
        <dbReference type="SAM" id="MobiDB-lite"/>
    </source>
</evidence>
<gene>
    <name evidence="1" type="primary">MDM12</name>
    <name type="ordered locus">CNK02480</name>
</gene>
<proteinExistence type="inferred from homology"/>
<keyword id="KW-0256">Endoplasmic reticulum</keyword>
<keyword id="KW-0445">Lipid transport</keyword>
<keyword id="KW-0446">Lipid-binding</keyword>
<keyword id="KW-0472">Membrane</keyword>
<keyword id="KW-0496">Mitochondrion</keyword>
<keyword id="KW-1000">Mitochondrion outer membrane</keyword>
<keyword id="KW-1185">Reference proteome</keyword>
<keyword id="KW-0813">Transport</keyword>
<dbReference type="EMBL" id="AE017351">
    <property type="protein sequence ID" value="AAW46202.1"/>
    <property type="molecule type" value="Genomic_DNA"/>
</dbReference>
<dbReference type="RefSeq" id="XP_567719.1">
    <property type="nucleotide sequence ID" value="XM_567719.1"/>
</dbReference>
<dbReference type="FunCoup" id="P0CO68">
    <property type="interactions" value="33"/>
</dbReference>
<dbReference type="STRING" id="214684.P0CO68"/>
<dbReference type="PaxDb" id="214684-P0CO68"/>
<dbReference type="EnsemblFungi" id="AAW46202">
    <property type="protein sequence ID" value="AAW46202"/>
    <property type="gene ID" value="CNK02480"/>
</dbReference>
<dbReference type="GeneID" id="3254547"/>
<dbReference type="KEGG" id="cne:CNK02480"/>
<dbReference type="VEuPathDB" id="FungiDB:CNK02480"/>
<dbReference type="eggNOG" id="ENOG502S1MJ">
    <property type="taxonomic scope" value="Eukaryota"/>
</dbReference>
<dbReference type="HOGENOM" id="CLU_026794_1_0_1"/>
<dbReference type="InParanoid" id="P0CO68"/>
<dbReference type="OMA" id="AAWPSWI"/>
<dbReference type="OrthoDB" id="3356905at2759"/>
<dbReference type="Proteomes" id="UP000002149">
    <property type="component" value="Chromosome 11"/>
</dbReference>
<dbReference type="GO" id="GO:0005789">
    <property type="term" value="C:endoplasmic reticulum membrane"/>
    <property type="evidence" value="ECO:0007669"/>
    <property type="project" value="UniProtKB-SubCell"/>
</dbReference>
<dbReference type="GO" id="GO:0032865">
    <property type="term" value="C:ERMES complex"/>
    <property type="evidence" value="ECO:0000318"/>
    <property type="project" value="GO_Central"/>
</dbReference>
<dbReference type="GO" id="GO:0008289">
    <property type="term" value="F:lipid binding"/>
    <property type="evidence" value="ECO:0007669"/>
    <property type="project" value="UniProtKB-KW"/>
</dbReference>
<dbReference type="GO" id="GO:0000002">
    <property type="term" value="P:mitochondrial genome maintenance"/>
    <property type="evidence" value="ECO:0007669"/>
    <property type="project" value="UniProtKB-UniRule"/>
</dbReference>
<dbReference type="GO" id="GO:1990456">
    <property type="term" value="P:mitochondrion-endoplasmic reticulum membrane tethering"/>
    <property type="evidence" value="ECO:0000318"/>
    <property type="project" value="GO_Central"/>
</dbReference>
<dbReference type="GO" id="GO:0015914">
    <property type="term" value="P:phospholipid transport"/>
    <property type="evidence" value="ECO:0000318"/>
    <property type="project" value="GO_Central"/>
</dbReference>
<dbReference type="GO" id="GO:0045040">
    <property type="term" value="P:protein insertion into mitochondrial outer membrane"/>
    <property type="evidence" value="ECO:0007669"/>
    <property type="project" value="UniProtKB-UniRule"/>
</dbReference>
<dbReference type="CDD" id="cd21672">
    <property type="entry name" value="SMP_Mdm12"/>
    <property type="match status" value="1"/>
</dbReference>
<dbReference type="HAMAP" id="MF_03104">
    <property type="entry name" value="Mdm12"/>
    <property type="match status" value="1"/>
</dbReference>
<dbReference type="InterPro" id="IPR027532">
    <property type="entry name" value="Mdm12"/>
</dbReference>
<dbReference type="InterPro" id="IPR019411">
    <property type="entry name" value="MMM1_dom"/>
</dbReference>
<dbReference type="InterPro" id="IPR031468">
    <property type="entry name" value="SMP_LBD"/>
</dbReference>
<dbReference type="PANTHER" id="PTHR28204">
    <property type="entry name" value="MITOCHONDRIAL DISTRIBUTION AND MORPHOLOGY PROTEIN 12"/>
    <property type="match status" value="1"/>
</dbReference>
<dbReference type="PANTHER" id="PTHR28204:SF1">
    <property type="entry name" value="MITOCHONDRIAL DISTRIBUTION AND MORPHOLOGY PROTEIN 12"/>
    <property type="match status" value="1"/>
</dbReference>
<dbReference type="Pfam" id="PF10296">
    <property type="entry name" value="MMM1"/>
    <property type="match status" value="1"/>
</dbReference>
<dbReference type="PROSITE" id="PS51847">
    <property type="entry name" value="SMP"/>
    <property type="match status" value="1"/>
</dbReference>